<geneLocation type="chloroplast"/>
<protein>
    <recommendedName>
        <fullName evidence="1">NAD(P)H-quinone oxidoreductase subunit 2 A, chloroplastic</fullName>
        <ecNumber evidence="1">7.1.1.-</ecNumber>
    </recommendedName>
    <alternativeName>
        <fullName evidence="1">NAD(P)H dehydrogenase, subunit 2 A</fullName>
    </alternativeName>
    <alternativeName>
        <fullName evidence="1">NADH-plastoquinone oxidoreductase subunit 2 A</fullName>
    </alternativeName>
</protein>
<evidence type="ECO:0000255" key="1">
    <source>
        <dbReference type="HAMAP-Rule" id="MF_00445"/>
    </source>
</evidence>
<proteinExistence type="inferred from homology"/>
<feature type="chain" id="PRO_0000275606" description="NAD(P)H-quinone oxidoreductase subunit 2 A, chloroplastic">
    <location>
        <begin position="1"/>
        <end position="510"/>
    </location>
</feature>
<feature type="transmembrane region" description="Helical" evidence="1">
    <location>
        <begin position="24"/>
        <end position="44"/>
    </location>
</feature>
<feature type="transmembrane region" description="Helical" evidence="1">
    <location>
        <begin position="57"/>
        <end position="77"/>
    </location>
</feature>
<feature type="transmembrane region" description="Helical" evidence="1">
    <location>
        <begin position="99"/>
        <end position="119"/>
    </location>
</feature>
<feature type="transmembrane region" description="Helical" evidence="1">
    <location>
        <begin position="124"/>
        <end position="144"/>
    </location>
</feature>
<feature type="transmembrane region" description="Helical" evidence="1">
    <location>
        <begin position="149"/>
        <end position="169"/>
    </location>
</feature>
<feature type="transmembrane region" description="Helical" evidence="1">
    <location>
        <begin position="183"/>
        <end position="203"/>
    </location>
</feature>
<feature type="transmembrane region" description="Helical" evidence="1">
    <location>
        <begin position="227"/>
        <end position="247"/>
    </location>
</feature>
<feature type="transmembrane region" description="Helical" evidence="1">
    <location>
        <begin position="295"/>
        <end position="315"/>
    </location>
</feature>
<feature type="transmembrane region" description="Helical" evidence="1">
    <location>
        <begin position="323"/>
        <end position="343"/>
    </location>
</feature>
<feature type="transmembrane region" description="Helical" evidence="1">
    <location>
        <begin position="354"/>
        <end position="374"/>
    </location>
</feature>
<feature type="transmembrane region" description="Helical" evidence="1">
    <location>
        <begin position="395"/>
        <end position="415"/>
    </location>
</feature>
<feature type="transmembrane region" description="Helical" evidence="1">
    <location>
        <begin position="418"/>
        <end position="438"/>
    </location>
</feature>
<feature type="transmembrane region" description="Helical" evidence="1">
    <location>
        <begin position="484"/>
        <end position="504"/>
    </location>
</feature>
<name>NU2C1_SOLBU</name>
<sequence length="510" mass="56645">MIWHVQNENFILDSTRIFMKAFHLLLFDGSLIFPECILIFGLILLLMIDSTSDQKDIPWLYFISSTSLVMSITALLFRWREEPMISFSGNFQTNNFNEIFQFLILLCSTLCIPLSVEYIECTEMAITEFLLFVLTATLGGMFLCGANDLITIFVAPECFSLCSYLLSGYTKKDVRSNEATMKYLLMGGASSSILVHGFSWLYGSSGGEIELQEIVNGLINTQMYNSPGISIALIFITVGIGFKLSPAPSHQWTPDVYEGSPTPVVAFLSVTSKVAASASATRIFDIPFYFSSNEWHLLLEILAILSMILGNLIAITQTSMKRMLAYSSIGQIGYVIIGIIVGDSNDGYASMITYMLFYISMNLGTFACIVLFGLRTGTDNIRDYAGLYTKDPFLALSLALCLLSLGGLPPLAGFFGKLYLFWCGWQAGLYFLVLIGLLTSVVSIYYYLKIIKLLMTGRNQEITPHVRNYRRSPLRSNNSIELSMIVCVIASTIPGISMNPIIAIAQDSLF</sequence>
<keyword id="KW-0150">Chloroplast</keyword>
<keyword id="KW-0472">Membrane</keyword>
<keyword id="KW-0520">NAD</keyword>
<keyword id="KW-0521">NADP</keyword>
<keyword id="KW-0934">Plastid</keyword>
<keyword id="KW-0618">Plastoquinone</keyword>
<keyword id="KW-0874">Quinone</keyword>
<keyword id="KW-0793">Thylakoid</keyword>
<keyword id="KW-1278">Translocase</keyword>
<keyword id="KW-0812">Transmembrane</keyword>
<keyword id="KW-1133">Transmembrane helix</keyword>
<keyword id="KW-0813">Transport</keyword>
<reference key="1">
    <citation type="journal article" date="2006" name="Theor. Appl. Genet.">
        <title>Complete chloroplast genome sequences of Solanum bulbocastanum, Solanum lycopersicum and comparative analyses with other Solanaceae genomes.</title>
        <authorList>
            <person name="Daniell H."/>
            <person name="Lee S.-B."/>
            <person name="Grevich J."/>
            <person name="Saski C."/>
            <person name="Quesada-Vargas T."/>
            <person name="Guda C."/>
            <person name="Tomkins J."/>
            <person name="Jansen R.K."/>
        </authorList>
    </citation>
    <scope>NUCLEOTIDE SEQUENCE [LARGE SCALE GENOMIC DNA]</scope>
    <source>
        <strain>cv. PT29</strain>
    </source>
</reference>
<dbReference type="EC" id="7.1.1.-" evidence="1"/>
<dbReference type="EMBL" id="DQ347958">
    <property type="protein sequence ID" value="ABC56258.1"/>
    <property type="molecule type" value="Genomic_DNA"/>
</dbReference>
<dbReference type="SMR" id="P0CD44"/>
<dbReference type="GO" id="GO:0009535">
    <property type="term" value="C:chloroplast thylakoid membrane"/>
    <property type="evidence" value="ECO:0007669"/>
    <property type="project" value="UniProtKB-SubCell"/>
</dbReference>
<dbReference type="GO" id="GO:0008137">
    <property type="term" value="F:NADH dehydrogenase (ubiquinone) activity"/>
    <property type="evidence" value="ECO:0007669"/>
    <property type="project" value="InterPro"/>
</dbReference>
<dbReference type="GO" id="GO:0048038">
    <property type="term" value="F:quinone binding"/>
    <property type="evidence" value="ECO:0007669"/>
    <property type="project" value="UniProtKB-KW"/>
</dbReference>
<dbReference type="GO" id="GO:0042773">
    <property type="term" value="P:ATP synthesis coupled electron transport"/>
    <property type="evidence" value="ECO:0007669"/>
    <property type="project" value="InterPro"/>
</dbReference>
<dbReference type="GO" id="GO:0019684">
    <property type="term" value="P:photosynthesis, light reaction"/>
    <property type="evidence" value="ECO:0007669"/>
    <property type="project" value="UniProtKB-UniRule"/>
</dbReference>
<dbReference type="HAMAP" id="MF_00445">
    <property type="entry name" value="NDH1_NuoN_1"/>
    <property type="match status" value="1"/>
</dbReference>
<dbReference type="InterPro" id="IPR010096">
    <property type="entry name" value="NADH-Q_OxRdtase_suN/2"/>
</dbReference>
<dbReference type="InterPro" id="IPR001750">
    <property type="entry name" value="ND/Mrp_TM"/>
</dbReference>
<dbReference type="InterPro" id="IPR045693">
    <property type="entry name" value="Ndh2_N"/>
</dbReference>
<dbReference type="NCBIfam" id="TIGR01770">
    <property type="entry name" value="NDH_I_N"/>
    <property type="match status" value="1"/>
</dbReference>
<dbReference type="NCBIfam" id="NF002701">
    <property type="entry name" value="PRK02504.1"/>
    <property type="match status" value="1"/>
</dbReference>
<dbReference type="PANTHER" id="PTHR22773">
    <property type="entry name" value="NADH DEHYDROGENASE"/>
    <property type="match status" value="1"/>
</dbReference>
<dbReference type="Pfam" id="PF19530">
    <property type="entry name" value="Ndh2_N"/>
    <property type="match status" value="1"/>
</dbReference>
<dbReference type="Pfam" id="PF00361">
    <property type="entry name" value="Proton_antipo_M"/>
    <property type="match status" value="1"/>
</dbReference>
<dbReference type="PRINTS" id="PR01434">
    <property type="entry name" value="NADHDHGNASE5"/>
</dbReference>
<gene>
    <name evidence="1" type="primary">ndhB1</name>
</gene>
<comment type="function">
    <text evidence="1">NDH shuttles electrons from NAD(P)H:plastoquinone, via FMN and iron-sulfur (Fe-S) centers, to quinones in the photosynthetic chain and possibly in a chloroplast respiratory chain. The immediate electron acceptor for the enzyme in this species is believed to be plastoquinone. Couples the redox reaction to proton translocation, and thus conserves the redox energy in a proton gradient.</text>
</comment>
<comment type="catalytic activity">
    <reaction evidence="1">
        <text>a plastoquinone + NADH + (n+1) H(+)(in) = a plastoquinol + NAD(+) + n H(+)(out)</text>
        <dbReference type="Rhea" id="RHEA:42608"/>
        <dbReference type="Rhea" id="RHEA-COMP:9561"/>
        <dbReference type="Rhea" id="RHEA-COMP:9562"/>
        <dbReference type="ChEBI" id="CHEBI:15378"/>
        <dbReference type="ChEBI" id="CHEBI:17757"/>
        <dbReference type="ChEBI" id="CHEBI:57540"/>
        <dbReference type="ChEBI" id="CHEBI:57945"/>
        <dbReference type="ChEBI" id="CHEBI:62192"/>
    </reaction>
</comment>
<comment type="catalytic activity">
    <reaction evidence="1">
        <text>a plastoquinone + NADPH + (n+1) H(+)(in) = a plastoquinol + NADP(+) + n H(+)(out)</text>
        <dbReference type="Rhea" id="RHEA:42612"/>
        <dbReference type="Rhea" id="RHEA-COMP:9561"/>
        <dbReference type="Rhea" id="RHEA-COMP:9562"/>
        <dbReference type="ChEBI" id="CHEBI:15378"/>
        <dbReference type="ChEBI" id="CHEBI:17757"/>
        <dbReference type="ChEBI" id="CHEBI:57783"/>
        <dbReference type="ChEBI" id="CHEBI:58349"/>
        <dbReference type="ChEBI" id="CHEBI:62192"/>
    </reaction>
</comment>
<comment type="subunit">
    <text evidence="1">NDH is composed of at least 16 different subunits, 5 of which are encoded in the nucleus.</text>
</comment>
<comment type="subcellular location">
    <subcellularLocation>
        <location evidence="1">Plastid</location>
        <location evidence="1">Chloroplast thylakoid membrane</location>
        <topology evidence="1">Multi-pass membrane protein</topology>
    </subcellularLocation>
</comment>
<comment type="similarity">
    <text evidence="1">Belongs to the complex I subunit 2 family.</text>
</comment>
<accession>P0CD44</accession>
<accession>Q2MIE2</accession>
<organism>
    <name type="scientific">Solanum bulbocastanum</name>
    <name type="common">Wild potato</name>
    <dbReference type="NCBI Taxonomy" id="147425"/>
    <lineage>
        <taxon>Eukaryota</taxon>
        <taxon>Viridiplantae</taxon>
        <taxon>Streptophyta</taxon>
        <taxon>Embryophyta</taxon>
        <taxon>Tracheophyta</taxon>
        <taxon>Spermatophyta</taxon>
        <taxon>Magnoliopsida</taxon>
        <taxon>eudicotyledons</taxon>
        <taxon>Gunneridae</taxon>
        <taxon>Pentapetalae</taxon>
        <taxon>asterids</taxon>
        <taxon>lamiids</taxon>
        <taxon>Solanales</taxon>
        <taxon>Solanaceae</taxon>
        <taxon>Solanoideae</taxon>
        <taxon>Solaneae</taxon>
        <taxon>Solanum</taxon>
    </lineage>
</organism>